<proteinExistence type="evidence at protein level"/>
<feature type="signal peptide" evidence="4">
    <location>
        <begin position="1"/>
        <end position="19"/>
    </location>
</feature>
<feature type="chain" id="PRO_0000010881" description="Interleukin-21 receptor">
    <location>
        <begin position="20"/>
        <end position="538"/>
    </location>
</feature>
<feature type="topological domain" description="Extracellular" evidence="1">
    <location>
        <begin position="20"/>
        <end position="232"/>
    </location>
</feature>
<feature type="transmembrane region" description="Helical" evidence="1">
    <location>
        <begin position="233"/>
        <end position="253"/>
    </location>
</feature>
<feature type="topological domain" description="Cytoplasmic" evidence="1">
    <location>
        <begin position="254"/>
        <end position="538"/>
    </location>
</feature>
<feature type="domain" description="Fibronectin type-III 1" evidence="2">
    <location>
        <begin position="21"/>
        <end position="118"/>
    </location>
</feature>
<feature type="domain" description="Fibronectin type-III 2" evidence="2">
    <location>
        <begin position="119"/>
        <end position="228"/>
    </location>
</feature>
<feature type="region of interest" description="Disordered" evidence="3">
    <location>
        <begin position="342"/>
        <end position="367"/>
    </location>
</feature>
<feature type="region of interest" description="Disordered" evidence="3">
    <location>
        <begin position="457"/>
        <end position="487"/>
    </location>
</feature>
<feature type="short sequence motif" description="WSXWS motif">
    <location>
        <begin position="214"/>
        <end position="218"/>
    </location>
</feature>
<feature type="short sequence motif" description="Box 1 motif">
    <location>
        <begin position="266"/>
        <end position="274"/>
    </location>
</feature>
<feature type="glycosylation site" description="N-linked (GlcNAc...) asparagine" evidence="5">
    <location>
        <position position="73"/>
    </location>
</feature>
<feature type="glycosylation site" description="N-linked (GlcNAc...) asparagine" evidence="1">
    <location>
        <position position="97"/>
    </location>
</feature>
<feature type="glycosylation site" description="N-linked (GlcNAc...) asparagine" evidence="1">
    <location>
        <position position="104"/>
    </location>
</feature>
<feature type="glycosylation site" description="N-linked (GlcNAc...) asparagine" evidence="1">
    <location>
        <position position="125"/>
    </location>
</feature>
<feature type="glycosylation site" description="N-linked (GlcNAc...) asparagine" evidence="1">
    <location>
        <position position="135"/>
    </location>
</feature>
<feature type="glycosylation site" description="C-linked (Man) tryptophan" evidence="5">
    <location>
        <position position="214"/>
    </location>
</feature>
<feature type="disulfide bond" evidence="5">
    <location>
        <begin position="20"/>
        <end position="109"/>
    </location>
</feature>
<feature type="disulfide bond" evidence="5">
    <location>
        <begin position="25"/>
        <end position="35"/>
    </location>
</feature>
<feature type="disulfide bond" evidence="5">
    <location>
        <begin position="65"/>
        <end position="81"/>
    </location>
</feature>
<feature type="sequence variant" id="VAR_069898" description="In IMD56; loss of function mutation." evidence="6">
    <location>
        <begin position="81"/>
        <end position="82"/>
    </location>
</feature>
<feature type="sequence variant" id="VAR_014360" description="In dbSNP:rs3093370." evidence="7">
    <original>R</original>
    <variation>C</variation>
    <location>
        <position position="191"/>
    </location>
</feature>
<feature type="sequence variant" id="VAR_069899" description="In IMD56; loss of function mutation; the mutation results in defective trafficking of the protein, with misfolding, impaired processing and abnormal subcellular distribution rather than proper expression at the plasma membrane; dbSNP:rs397514685." evidence="6">
    <original>R</original>
    <variation>L</variation>
    <location>
        <position position="201"/>
    </location>
</feature>
<feature type="sequence variant" id="VAR_014361" description="In dbSNP:rs3093385." evidence="7">
    <original>S</original>
    <variation>R</variation>
    <location>
        <position position="318"/>
    </location>
</feature>
<feature type="sequence variant" id="VAR_014362" description="In dbSNP:rs3093386." evidence="7">
    <original>G</original>
    <variation>S</variation>
    <location>
        <position position="484"/>
    </location>
</feature>
<feature type="sequence conflict" description="In Ref. 2; AAG23419." evidence="8" ref="2">
    <original>G</original>
    <variation>R</variation>
    <location>
        <position position="386"/>
    </location>
</feature>
<feature type="strand" evidence="11">
    <location>
        <begin position="24"/>
        <end position="27"/>
    </location>
</feature>
<feature type="strand" evidence="11">
    <location>
        <begin position="29"/>
        <end position="38"/>
    </location>
</feature>
<feature type="strand" evidence="11">
    <location>
        <begin position="41"/>
        <end position="43"/>
    </location>
</feature>
<feature type="strand" evidence="11">
    <location>
        <begin position="46"/>
        <end position="52"/>
    </location>
</feature>
<feature type="strand" evidence="11">
    <location>
        <begin position="57"/>
        <end position="59"/>
    </location>
</feature>
<feature type="strand" evidence="11">
    <location>
        <begin position="64"/>
        <end position="72"/>
    </location>
</feature>
<feature type="strand" evidence="11">
    <location>
        <begin position="74"/>
        <end position="82"/>
    </location>
</feature>
<feature type="helix" evidence="9">
    <location>
        <begin position="85"/>
        <end position="87"/>
    </location>
</feature>
<feature type="strand" evidence="11">
    <location>
        <begin position="93"/>
        <end position="99"/>
    </location>
</feature>
<feature type="strand" evidence="11">
    <location>
        <begin position="101"/>
        <end position="104"/>
    </location>
</feature>
<feature type="strand" evidence="11">
    <location>
        <begin position="106"/>
        <end position="113"/>
    </location>
</feature>
<feature type="helix" evidence="11">
    <location>
        <begin position="114"/>
        <end position="116"/>
    </location>
</feature>
<feature type="strand" evidence="11">
    <location>
        <begin position="124"/>
        <end position="127"/>
    </location>
</feature>
<feature type="strand" evidence="11">
    <location>
        <begin position="130"/>
        <end position="139"/>
    </location>
</feature>
<feature type="helix" evidence="9">
    <location>
        <begin position="141"/>
        <end position="143"/>
    </location>
</feature>
<feature type="helix" evidence="11">
    <location>
        <begin position="145"/>
        <end position="150"/>
    </location>
</feature>
<feature type="strand" evidence="11">
    <location>
        <begin position="154"/>
        <end position="165"/>
    </location>
</feature>
<feature type="strand" evidence="11">
    <location>
        <begin position="172"/>
        <end position="176"/>
    </location>
</feature>
<feature type="strand" evidence="11">
    <location>
        <begin position="181"/>
        <end position="185"/>
    </location>
</feature>
<feature type="helix" evidence="10">
    <location>
        <begin position="187"/>
        <end position="189"/>
    </location>
</feature>
<feature type="strand" evidence="11">
    <location>
        <begin position="195"/>
        <end position="204"/>
    </location>
</feature>
<feature type="turn" evidence="10">
    <location>
        <begin position="206"/>
        <end position="209"/>
    </location>
</feature>
<feature type="strand" evidence="11">
    <location>
        <begin position="221"/>
        <end position="224"/>
    </location>
</feature>
<protein>
    <recommendedName>
        <fullName>Interleukin-21 receptor</fullName>
        <shortName>IL-21 receptor</shortName>
        <shortName>IL-21R</shortName>
    </recommendedName>
    <alternativeName>
        <fullName>Novel interleukin receptor</fullName>
    </alternativeName>
    <cdAntigenName>CD360</cdAntigenName>
</protein>
<sequence>MPRGWAAPLLLLLLQGGWGCPDLVCYTDYLQTVICILEMWNLHPSTLTLTWQDQYEELKDEATSCSLHRSAHNATHATYTCHMDVFHFMADDIFSVNITDQSGNYSQECGSFLLAESIKPAPPFNVTVTFSGQYNISWRSDYEDPAFYMLKGKLQYELQYRNRGDPWAVSPRRKLISVDSRSVSLLPLEFRKDSSYELQVRAGPMPGSSYQGTWSEWSDPVIFQTQSEELKEGWNPHLLLLLLLVIVFIPAFWSLKTHPLWRLWKKIWAVPSPERFFMPLYKGCSGDFKKWVGAPFTGSSLELGPWSPEVPSTLEVYSCHPPRSPAKRLQLTELQEPAELVESDGVPKPSFWPTAQNSGGSAYSEERDRPYGLVSIDTVTVLDAEGPCTWPCSCEDDGYPALDLDAGLEPSPGLEDPLLDAGTTVLSCGCVSAGSPGLGGPLGSLLDRLKPPLADGEDWAGGLPWGGRSPGGVSESEAGSPLAGLDMDTFDSGFVGSDCSSPVECDFTSPGDEGPPRSYLRQWVVIPPPLSSPGPQAS</sequence>
<keyword id="KW-0002">3D-structure</keyword>
<keyword id="KW-0160">Chromosomal rearrangement</keyword>
<keyword id="KW-0903">Direct protein sequencing</keyword>
<keyword id="KW-0225">Disease variant</keyword>
<keyword id="KW-1015">Disulfide bond</keyword>
<keyword id="KW-0325">Glycoprotein</keyword>
<keyword id="KW-0472">Membrane</keyword>
<keyword id="KW-1267">Proteomics identification</keyword>
<keyword id="KW-0675">Receptor</keyword>
<keyword id="KW-1185">Reference proteome</keyword>
<keyword id="KW-0677">Repeat</keyword>
<keyword id="KW-0732">Signal</keyword>
<keyword id="KW-0812">Transmembrane</keyword>
<keyword id="KW-1133">Transmembrane helix</keyword>
<organism>
    <name type="scientific">Homo sapiens</name>
    <name type="common">Human</name>
    <dbReference type="NCBI Taxonomy" id="9606"/>
    <lineage>
        <taxon>Eukaryota</taxon>
        <taxon>Metazoa</taxon>
        <taxon>Chordata</taxon>
        <taxon>Craniata</taxon>
        <taxon>Vertebrata</taxon>
        <taxon>Euteleostomi</taxon>
        <taxon>Mammalia</taxon>
        <taxon>Eutheria</taxon>
        <taxon>Euarchontoglires</taxon>
        <taxon>Primates</taxon>
        <taxon>Haplorrhini</taxon>
        <taxon>Catarrhini</taxon>
        <taxon>Hominidae</taxon>
        <taxon>Homo</taxon>
    </lineage>
</organism>
<comment type="function">
    <text>This is a receptor for interleukin-21.</text>
</comment>
<comment type="subunit">
    <text evidence="5">Heterodimer with the common gamma subunit. Associates with JAK1.</text>
</comment>
<comment type="interaction">
    <interactant intactId="EBI-12558959">
        <id>Q9HBE5</id>
    </interactant>
    <interactant intactId="EBI-745213">
        <id>P29972</id>
        <label>AQP1</label>
    </interactant>
    <organismsDiffer>false</organismsDiffer>
    <experiments>3</experiments>
</comment>
<comment type="subcellular location">
    <subcellularLocation>
        <location>Membrane</location>
        <topology>Single-pass type I membrane protein</topology>
    </subcellularLocation>
</comment>
<comment type="tissue specificity">
    <text>Selectively expressed in lymphoid tissues. Most highly expressed in thymus and spleen.</text>
</comment>
<comment type="domain">
    <text evidence="5">The WSXWS motif appears to be necessary for proper protein folding and thereby efficient intracellular transport and cell-surface receptor binding.</text>
</comment>
<comment type="domain">
    <text evidence="5">The box 1 motif is required for JAK interaction and/or activation.</text>
</comment>
<comment type="PTM">
    <text>C-mannosylated at Trp-214 in the WSXWS motif, the sugar chain makes extensive hydrogen bonds with Asn-73 sugar, and bridges the two fibronectin domains transforming the V-shaped receptor into an A-frame.</text>
</comment>
<comment type="disease" evidence="6">
    <disease id="DI-03764">
        <name>Immunodeficiency 56</name>
        <acronym>IMD56</acronym>
        <description>An autosomal recessive primary immunodeficiency characterized by B- and T-cell defects and variable dysfunction of NK cells. Patients tend to have normal numbers of lymphocytes, but show defective class-switched B-cells, low IgG, defective antibody response, and defective T-cell responses to certain antigens.</description>
        <dbReference type="MIM" id="615207"/>
    </disease>
    <text>The disease is caused by variants affecting the gene represented in this entry.</text>
</comment>
<comment type="disease">
    <text>Chromosomal aberrations involving IL21R is a cause of B-cell non-Hodgkin lymphomas (B-cell NHL). Translocation t(3;16)(q27;p11), with BCL6.</text>
</comment>
<comment type="similarity">
    <text evidence="8">Belongs to the type I cytokine receptor family. Type 4 subfamily.</text>
</comment>
<comment type="online information" name="Atlas of Genetics and Cytogenetics in Oncology and Haematology">
    <link uri="https://atlasgeneticsoncology.org/gene/40955/IL21R"/>
</comment>
<name>IL21R_HUMAN</name>
<evidence type="ECO:0000255" key="1"/>
<evidence type="ECO:0000255" key="2">
    <source>
        <dbReference type="PROSITE-ProRule" id="PRU00316"/>
    </source>
</evidence>
<evidence type="ECO:0000256" key="3">
    <source>
        <dbReference type="SAM" id="MobiDB-lite"/>
    </source>
</evidence>
<evidence type="ECO:0000269" key="4">
    <source>
    </source>
</evidence>
<evidence type="ECO:0000269" key="5">
    <source>
    </source>
</evidence>
<evidence type="ECO:0000269" key="6">
    <source>
    </source>
</evidence>
<evidence type="ECO:0000269" key="7">
    <source ref="4"/>
</evidence>
<evidence type="ECO:0000305" key="8"/>
<evidence type="ECO:0007829" key="9">
    <source>
        <dbReference type="PDB" id="3TGX"/>
    </source>
</evidence>
<evidence type="ECO:0007829" key="10">
    <source>
        <dbReference type="PDB" id="4NZD"/>
    </source>
</evidence>
<evidence type="ECO:0007829" key="11">
    <source>
        <dbReference type="PDB" id="7KQ7"/>
    </source>
</evidence>
<reference key="1">
    <citation type="journal article" date="2000" name="Nature">
        <title>Interleukin 21 and its receptor are involved in NK cell expansion and regulation of lymphocyte function.</title>
        <authorList>
            <person name="Parrish-Novak J."/>
            <person name="Dillon S.R."/>
            <person name="Nelson A."/>
            <person name="Hammond A."/>
            <person name="Sprecher C."/>
            <person name="Gross J.A."/>
            <person name="Johnston J."/>
            <person name="Madden K."/>
            <person name="Xu W."/>
            <person name="West J."/>
            <person name="Schrader S."/>
            <person name="Burkhead S."/>
            <person name="Heipel M."/>
            <person name="Brandt C."/>
            <person name="Kuijper J.L."/>
            <person name="Kramer J."/>
            <person name="Conklin D."/>
            <person name="Presnell S.R."/>
            <person name="Berry J."/>
            <person name="Shiota F."/>
            <person name="Bort S."/>
            <person name="Hambly K."/>
            <person name="Mudri S."/>
            <person name="Clegg C."/>
            <person name="Moore M."/>
            <person name="Grant F.J."/>
            <person name="Lofton-Day C."/>
            <person name="Gilbert T."/>
            <person name="Raymond F."/>
            <person name="Ching A."/>
            <person name="Yao L."/>
            <person name="Smith D."/>
            <person name="Webster P."/>
            <person name="Whitmore T."/>
            <person name="Maurer M."/>
            <person name="Kaushansky K."/>
            <person name="Holly R.D."/>
            <person name="Foster D."/>
        </authorList>
    </citation>
    <scope>NUCLEOTIDE SEQUENCE [MRNA]</scope>
</reference>
<reference key="2">
    <citation type="journal article" date="2000" name="Proc. Natl. Acad. Sci. U.S.A.">
        <title>Cloning of a type I cytokine receptor most related to the IL-2 receptor beta chain.</title>
        <authorList>
            <person name="Ozaki K."/>
            <person name="Kikly K."/>
            <person name="Michalovich D."/>
            <person name="Young P.R."/>
            <person name="Leonard W.J."/>
        </authorList>
    </citation>
    <scope>NUCLEOTIDE SEQUENCE [MRNA]</scope>
</reference>
<reference key="3">
    <citation type="journal article" date="2003" name="Genome Res.">
        <title>The secreted protein discovery initiative (SPDI), a large-scale effort to identify novel human secreted and transmembrane proteins: a bioinformatics assessment.</title>
        <authorList>
            <person name="Clark H.F."/>
            <person name="Gurney A.L."/>
            <person name="Abaya E."/>
            <person name="Baker K."/>
            <person name="Baldwin D.T."/>
            <person name="Brush J."/>
            <person name="Chen J."/>
            <person name="Chow B."/>
            <person name="Chui C."/>
            <person name="Crowley C."/>
            <person name="Currell B."/>
            <person name="Deuel B."/>
            <person name="Dowd P."/>
            <person name="Eaton D."/>
            <person name="Foster J.S."/>
            <person name="Grimaldi C."/>
            <person name="Gu Q."/>
            <person name="Hass P.E."/>
            <person name="Heldens S."/>
            <person name="Huang A."/>
            <person name="Kim H.S."/>
            <person name="Klimowski L."/>
            <person name="Jin Y."/>
            <person name="Johnson S."/>
            <person name="Lee J."/>
            <person name="Lewis L."/>
            <person name="Liao D."/>
            <person name="Mark M.R."/>
            <person name="Robbie E."/>
            <person name="Sanchez C."/>
            <person name="Schoenfeld J."/>
            <person name="Seshagiri S."/>
            <person name="Simmons L."/>
            <person name="Singh J."/>
            <person name="Smith V."/>
            <person name="Stinson J."/>
            <person name="Vagts A."/>
            <person name="Vandlen R.L."/>
            <person name="Watanabe C."/>
            <person name="Wieand D."/>
            <person name="Woods K."/>
            <person name="Xie M.-H."/>
            <person name="Yansura D.G."/>
            <person name="Yi S."/>
            <person name="Yu G."/>
            <person name="Yuan J."/>
            <person name="Zhang M."/>
            <person name="Zhang Z."/>
            <person name="Goddard A.D."/>
            <person name="Wood W.I."/>
            <person name="Godowski P.J."/>
            <person name="Gray A.M."/>
        </authorList>
    </citation>
    <scope>NUCLEOTIDE SEQUENCE [LARGE SCALE MRNA]</scope>
</reference>
<reference key="4">
    <citation type="submission" date="2001-11" db="EMBL/GenBank/DDBJ databases">
        <authorList>
            <consortium name="SeattleSNPs variation discovery resource"/>
        </authorList>
    </citation>
    <scope>NUCLEOTIDE SEQUENCE [GENOMIC DNA]</scope>
    <scope>VARIANTS CYS-191; ARG-318 AND SER-484</scope>
</reference>
<reference key="5">
    <citation type="journal article" date="2004" name="Nat. Genet.">
        <title>Complete sequencing and characterization of 21,243 full-length human cDNAs.</title>
        <authorList>
            <person name="Ota T."/>
            <person name="Suzuki Y."/>
            <person name="Nishikawa T."/>
            <person name="Otsuki T."/>
            <person name="Sugiyama T."/>
            <person name="Irie R."/>
            <person name="Wakamatsu A."/>
            <person name="Hayashi K."/>
            <person name="Sato H."/>
            <person name="Nagai K."/>
            <person name="Kimura K."/>
            <person name="Makita H."/>
            <person name="Sekine M."/>
            <person name="Obayashi M."/>
            <person name="Nishi T."/>
            <person name="Shibahara T."/>
            <person name="Tanaka T."/>
            <person name="Ishii S."/>
            <person name="Yamamoto J."/>
            <person name="Saito K."/>
            <person name="Kawai Y."/>
            <person name="Isono Y."/>
            <person name="Nakamura Y."/>
            <person name="Nagahari K."/>
            <person name="Murakami K."/>
            <person name="Yasuda T."/>
            <person name="Iwayanagi T."/>
            <person name="Wagatsuma M."/>
            <person name="Shiratori A."/>
            <person name="Sudo H."/>
            <person name="Hosoiri T."/>
            <person name="Kaku Y."/>
            <person name="Kodaira H."/>
            <person name="Kondo H."/>
            <person name="Sugawara M."/>
            <person name="Takahashi M."/>
            <person name="Kanda K."/>
            <person name="Yokoi T."/>
            <person name="Furuya T."/>
            <person name="Kikkawa E."/>
            <person name="Omura Y."/>
            <person name="Abe K."/>
            <person name="Kamihara K."/>
            <person name="Katsuta N."/>
            <person name="Sato K."/>
            <person name="Tanikawa M."/>
            <person name="Yamazaki M."/>
            <person name="Ninomiya K."/>
            <person name="Ishibashi T."/>
            <person name="Yamashita H."/>
            <person name="Murakawa K."/>
            <person name="Fujimori K."/>
            <person name="Tanai H."/>
            <person name="Kimata M."/>
            <person name="Watanabe M."/>
            <person name="Hiraoka S."/>
            <person name="Chiba Y."/>
            <person name="Ishida S."/>
            <person name="Ono Y."/>
            <person name="Takiguchi S."/>
            <person name="Watanabe S."/>
            <person name="Yosida M."/>
            <person name="Hotuta T."/>
            <person name="Kusano J."/>
            <person name="Kanehori K."/>
            <person name="Takahashi-Fujii A."/>
            <person name="Hara H."/>
            <person name="Tanase T.-O."/>
            <person name="Nomura Y."/>
            <person name="Togiya S."/>
            <person name="Komai F."/>
            <person name="Hara R."/>
            <person name="Takeuchi K."/>
            <person name="Arita M."/>
            <person name="Imose N."/>
            <person name="Musashino K."/>
            <person name="Yuuki H."/>
            <person name="Oshima A."/>
            <person name="Sasaki N."/>
            <person name="Aotsuka S."/>
            <person name="Yoshikawa Y."/>
            <person name="Matsunawa H."/>
            <person name="Ichihara T."/>
            <person name="Shiohata N."/>
            <person name="Sano S."/>
            <person name="Moriya S."/>
            <person name="Momiyama H."/>
            <person name="Satoh N."/>
            <person name="Takami S."/>
            <person name="Terashima Y."/>
            <person name="Suzuki O."/>
            <person name="Nakagawa S."/>
            <person name="Senoh A."/>
            <person name="Mizoguchi H."/>
            <person name="Goto Y."/>
            <person name="Shimizu F."/>
            <person name="Wakebe H."/>
            <person name="Hishigaki H."/>
            <person name="Watanabe T."/>
            <person name="Sugiyama A."/>
            <person name="Takemoto M."/>
            <person name="Kawakami B."/>
            <person name="Yamazaki M."/>
            <person name="Watanabe K."/>
            <person name="Kumagai A."/>
            <person name="Itakura S."/>
            <person name="Fukuzumi Y."/>
            <person name="Fujimori Y."/>
            <person name="Komiyama M."/>
            <person name="Tashiro H."/>
            <person name="Tanigami A."/>
            <person name="Fujiwara T."/>
            <person name="Ono T."/>
            <person name="Yamada K."/>
            <person name="Fujii Y."/>
            <person name="Ozaki K."/>
            <person name="Hirao M."/>
            <person name="Ohmori Y."/>
            <person name="Kawabata A."/>
            <person name="Hikiji T."/>
            <person name="Kobatake N."/>
            <person name="Inagaki H."/>
            <person name="Ikema Y."/>
            <person name="Okamoto S."/>
            <person name="Okitani R."/>
            <person name="Kawakami T."/>
            <person name="Noguchi S."/>
            <person name="Itoh T."/>
            <person name="Shigeta K."/>
            <person name="Senba T."/>
            <person name="Matsumura K."/>
            <person name="Nakajima Y."/>
            <person name="Mizuno T."/>
            <person name="Morinaga M."/>
            <person name="Sasaki M."/>
            <person name="Togashi T."/>
            <person name="Oyama M."/>
            <person name="Hata H."/>
            <person name="Watanabe M."/>
            <person name="Komatsu T."/>
            <person name="Mizushima-Sugano J."/>
            <person name="Satoh T."/>
            <person name="Shirai Y."/>
            <person name="Takahashi Y."/>
            <person name="Nakagawa K."/>
            <person name="Okumura K."/>
            <person name="Nagase T."/>
            <person name="Nomura N."/>
            <person name="Kikuchi H."/>
            <person name="Masuho Y."/>
            <person name="Yamashita R."/>
            <person name="Nakai K."/>
            <person name="Yada T."/>
            <person name="Nakamura Y."/>
            <person name="Ohara O."/>
            <person name="Isogai T."/>
            <person name="Sugano S."/>
        </authorList>
    </citation>
    <scope>NUCLEOTIDE SEQUENCE [LARGE SCALE MRNA]</scope>
    <source>
        <tissue>Thymus</tissue>
    </source>
</reference>
<reference key="6">
    <citation type="submission" date="2005-09" db="EMBL/GenBank/DDBJ databases">
        <authorList>
            <person name="Mural R.J."/>
            <person name="Istrail S."/>
            <person name="Sutton G.G."/>
            <person name="Florea L."/>
            <person name="Halpern A.L."/>
            <person name="Mobarry C.M."/>
            <person name="Lippert R."/>
            <person name="Walenz B."/>
            <person name="Shatkay H."/>
            <person name="Dew I."/>
            <person name="Miller J.R."/>
            <person name="Flanigan M.J."/>
            <person name="Edwards N.J."/>
            <person name="Bolanos R."/>
            <person name="Fasulo D."/>
            <person name="Halldorsson B.V."/>
            <person name="Hannenhalli S."/>
            <person name="Turner R."/>
            <person name="Yooseph S."/>
            <person name="Lu F."/>
            <person name="Nusskern D.R."/>
            <person name="Shue B.C."/>
            <person name="Zheng X.H."/>
            <person name="Zhong F."/>
            <person name="Delcher A.L."/>
            <person name="Huson D.H."/>
            <person name="Kravitz S.A."/>
            <person name="Mouchard L."/>
            <person name="Reinert K."/>
            <person name="Remington K.A."/>
            <person name="Clark A.G."/>
            <person name="Waterman M.S."/>
            <person name="Eichler E.E."/>
            <person name="Adams M.D."/>
            <person name="Hunkapiller M.W."/>
            <person name="Myers E.W."/>
            <person name="Venter J.C."/>
        </authorList>
    </citation>
    <scope>NUCLEOTIDE SEQUENCE [LARGE SCALE GENOMIC DNA]</scope>
</reference>
<reference key="7">
    <citation type="journal article" date="2004" name="Genome Res.">
        <title>The status, quality, and expansion of the NIH full-length cDNA project: the Mammalian Gene Collection (MGC).</title>
        <authorList>
            <consortium name="The MGC Project Team"/>
        </authorList>
    </citation>
    <scope>NUCLEOTIDE SEQUENCE [LARGE SCALE MRNA]</scope>
    <source>
        <tissue>B-cell</tissue>
        <tissue>Lymph</tissue>
    </source>
</reference>
<reference key="8">
    <citation type="journal article" date="2004" name="Protein Sci.">
        <title>Signal peptide prediction based on analysis of experimentally verified cleavage sites.</title>
        <authorList>
            <person name="Zhang Z."/>
            <person name="Henzel W.J."/>
        </authorList>
    </citation>
    <scope>PROTEIN SEQUENCE OF 20-34</scope>
</reference>
<reference key="9">
    <citation type="journal article" date="2002" name="Oncogene">
        <title>The gene for interleukin-21 receptor is the partner of BCL6 in t(3;16)(q27;p11), which is recurrently observed in diffuse large B-cell lymphoma.</title>
        <authorList>
            <person name="Ueda C."/>
            <person name="Akasaka T."/>
            <person name="Kurata M."/>
            <person name="Maesako Y."/>
            <person name="Nishikori M."/>
            <person name="Ichinohasama R."/>
            <person name="Imada K."/>
            <person name="Uchiyama T."/>
            <person name="Ohno H."/>
        </authorList>
    </citation>
    <scope>INVOLVEMENT IN B-CELL NON-HODGKIN LYMPHOMA</scope>
    <scope>CHROMOSOMAL TRANSLOCATION WITH BCL6</scope>
</reference>
<reference key="10">
    <citation type="journal article" date="2012" name="J. Biol. Chem.">
        <title>Crystal structure of interleukin-21 receptor (IL-21R) bound to IL-21 reveals that sugar chain interacting with WSXWS motif is integral part of IL-21R.</title>
        <authorList>
            <person name="Hamming O.J."/>
            <person name="Kang L."/>
            <person name="Svensson A."/>
            <person name="Karlsen J.L."/>
            <person name="Rahbek-Nielsen H."/>
            <person name="Paludan S.R."/>
            <person name="Hjorth S.A."/>
            <person name="Bondensgaard K."/>
            <person name="Hartmann R."/>
        </authorList>
    </citation>
    <scope>X-RAY CRYSTALLOGRAPHY (2.8 ANGSTROMS) OF 20-232 IN COMPLEX WITH IL21</scope>
    <scope>DOMAIN WSXWS MOTIF</scope>
    <scope>GLYCOSYLATION AT ASN-73 AND TRP-214</scope>
    <scope>DOMAINS FIBRONECTIN</scope>
    <scope>DISULFIDE BONDS</scope>
</reference>
<reference key="11">
    <citation type="journal article" date="2013" name="J. Exp. Med.">
        <title>Loss-of-function mutations in the IL-21 receptor gene cause a primary immunodeficiency syndrome.</title>
        <authorList>
            <person name="Kotlarz D."/>
            <person name="Zietara N."/>
            <person name="Uzel G."/>
            <person name="Weidemann T."/>
            <person name="Braun C.J."/>
            <person name="Diestelhorst J."/>
            <person name="Krawitz P.M."/>
            <person name="Robinson P.N."/>
            <person name="Hecht J."/>
            <person name="Puchalka J."/>
            <person name="Gertz E.M."/>
            <person name="Schaeffer A.A."/>
            <person name="Lawrence M.G."/>
            <person name="Kardava L."/>
            <person name="Pfeifer D."/>
            <person name="Baumann U."/>
            <person name="Pfister E.D."/>
            <person name="Hanson E.P."/>
            <person name="Schambach A."/>
            <person name="Jacobs R."/>
            <person name="Kreipe H."/>
            <person name="Moir S."/>
            <person name="Milner J.D."/>
            <person name="Schwille P."/>
            <person name="Mundlos S."/>
            <person name="Klein C."/>
        </authorList>
    </citation>
    <scope>VARIANTS IMD56 81-CYS-HIS-82 DEL AND LEU-201</scope>
    <scope>CHARACTERIZATION VARIANT IMD56 LEU-201</scope>
</reference>
<dbReference type="EMBL" id="AF254067">
    <property type="protein sequence ID" value="AAG29346.1"/>
    <property type="molecule type" value="mRNA"/>
</dbReference>
<dbReference type="EMBL" id="AF269133">
    <property type="protein sequence ID" value="AAG23419.1"/>
    <property type="molecule type" value="mRNA"/>
</dbReference>
<dbReference type="EMBL" id="AY358826">
    <property type="protein sequence ID" value="AAQ89185.1"/>
    <property type="molecule type" value="mRNA"/>
</dbReference>
<dbReference type="EMBL" id="AY064474">
    <property type="protein sequence ID" value="AAL39168.1"/>
    <property type="molecule type" value="Genomic_DNA"/>
</dbReference>
<dbReference type="EMBL" id="AK292663">
    <property type="protein sequence ID" value="BAF85352.1"/>
    <property type="molecule type" value="mRNA"/>
</dbReference>
<dbReference type="EMBL" id="CH471145">
    <property type="protein sequence ID" value="EAW55746.1"/>
    <property type="molecule type" value="Genomic_DNA"/>
</dbReference>
<dbReference type="EMBL" id="CH471145">
    <property type="protein sequence ID" value="EAW55747.1"/>
    <property type="molecule type" value="Genomic_DNA"/>
</dbReference>
<dbReference type="EMBL" id="CH471145">
    <property type="protein sequence ID" value="EAW55748.1"/>
    <property type="molecule type" value="Genomic_DNA"/>
</dbReference>
<dbReference type="EMBL" id="BC004348">
    <property type="protein sequence ID" value="AAH04348.1"/>
    <property type="molecule type" value="mRNA"/>
</dbReference>
<dbReference type="EMBL" id="BC007946">
    <property type="protein sequence ID" value="AAH07946.2"/>
    <property type="molecule type" value="mRNA"/>
</dbReference>
<dbReference type="CCDS" id="CCDS10630.1"/>
<dbReference type="RefSeq" id="NP_068570.1">
    <property type="nucleotide sequence ID" value="NM_021798.4"/>
</dbReference>
<dbReference type="RefSeq" id="NP_851564.1">
    <property type="nucleotide sequence ID" value="NM_181078.3"/>
</dbReference>
<dbReference type="RefSeq" id="NP_851565.4">
    <property type="nucleotide sequence ID" value="NM_181079.4"/>
</dbReference>
<dbReference type="RefSeq" id="XP_016878746.1">
    <property type="nucleotide sequence ID" value="XM_017023257.3"/>
</dbReference>
<dbReference type="RefSeq" id="XP_054236384.1">
    <property type="nucleotide sequence ID" value="XM_054380409.1"/>
</dbReference>
<dbReference type="PDB" id="3TGX">
    <property type="method" value="X-ray"/>
    <property type="resolution" value="2.80 A"/>
    <property type="chains" value="A/C/E/G/I/K/M/O=20-232"/>
</dbReference>
<dbReference type="PDB" id="4NZD">
    <property type="method" value="X-ray"/>
    <property type="resolution" value="2.75 A"/>
    <property type="chains" value="A/B/C=20-232"/>
</dbReference>
<dbReference type="PDB" id="6PLH">
    <property type="method" value="X-ray"/>
    <property type="resolution" value="1.60 A"/>
    <property type="chains" value="C=202-232"/>
</dbReference>
<dbReference type="PDB" id="7KQ7">
    <property type="method" value="X-ray"/>
    <property type="resolution" value="2.20 A"/>
    <property type="chains" value="B=20-233"/>
</dbReference>
<dbReference type="PDB" id="8ENT">
    <property type="method" value="X-ray"/>
    <property type="resolution" value="2.83 A"/>
    <property type="chains" value="B/E/H/K=20-229"/>
</dbReference>
<dbReference type="PDBsum" id="3TGX"/>
<dbReference type="PDBsum" id="4NZD"/>
<dbReference type="PDBsum" id="6PLH"/>
<dbReference type="PDBsum" id="7KQ7"/>
<dbReference type="PDBsum" id="8ENT"/>
<dbReference type="EMDB" id="EMD-28278"/>
<dbReference type="SMR" id="Q9HBE5"/>
<dbReference type="BioGRID" id="119095">
    <property type="interactions" value="6"/>
</dbReference>
<dbReference type="ComplexPortal" id="CPX-833">
    <property type="entry name" value="Interleukin-21 receptor-ligand complex"/>
</dbReference>
<dbReference type="CORUM" id="Q9HBE5"/>
<dbReference type="FunCoup" id="Q9HBE5">
    <property type="interactions" value="852"/>
</dbReference>
<dbReference type="IntAct" id="Q9HBE5">
    <property type="interactions" value="1"/>
</dbReference>
<dbReference type="STRING" id="9606.ENSP00000338010"/>
<dbReference type="GlyCosmos" id="Q9HBE5">
    <property type="glycosylation" value="6 sites, No reported glycans"/>
</dbReference>
<dbReference type="GlyGen" id="Q9HBE5">
    <property type="glycosylation" value="6 sites"/>
</dbReference>
<dbReference type="iPTMnet" id="Q9HBE5"/>
<dbReference type="PhosphoSitePlus" id="Q9HBE5"/>
<dbReference type="BioMuta" id="IL21R"/>
<dbReference type="DMDM" id="20454997"/>
<dbReference type="MassIVE" id="Q9HBE5"/>
<dbReference type="PaxDb" id="9606-ENSP00000338010"/>
<dbReference type="PeptideAtlas" id="Q9HBE5"/>
<dbReference type="ProteomicsDB" id="81535"/>
<dbReference type="ABCD" id="Q9HBE5">
    <property type="antibodies" value="59 sequenced antibodies"/>
</dbReference>
<dbReference type="Antibodypedia" id="12828">
    <property type="antibodies" value="497 antibodies from 43 providers"/>
</dbReference>
<dbReference type="DNASU" id="50615"/>
<dbReference type="Ensembl" id="ENST00000337929.8">
    <property type="protein sequence ID" value="ENSP00000338010.3"/>
    <property type="gene ID" value="ENSG00000103522.17"/>
</dbReference>
<dbReference type="Ensembl" id="ENST00000395754.4">
    <property type="protein sequence ID" value="ENSP00000379103.4"/>
    <property type="gene ID" value="ENSG00000103522.17"/>
</dbReference>
<dbReference type="Ensembl" id="ENST00000564089.5">
    <property type="protein sequence ID" value="ENSP00000456707.1"/>
    <property type="gene ID" value="ENSG00000103522.17"/>
</dbReference>
<dbReference type="GeneID" id="50615"/>
<dbReference type="KEGG" id="hsa:50615"/>
<dbReference type="MANE-Select" id="ENST00000337929.8">
    <property type="protein sequence ID" value="ENSP00000338010.3"/>
    <property type="RefSeq nucleotide sequence ID" value="NM_181078.3"/>
    <property type="RefSeq protein sequence ID" value="NP_851564.1"/>
</dbReference>
<dbReference type="UCSC" id="uc002doq.2">
    <property type="organism name" value="human"/>
</dbReference>
<dbReference type="AGR" id="HGNC:6006"/>
<dbReference type="CTD" id="50615"/>
<dbReference type="DisGeNET" id="50615"/>
<dbReference type="GeneCards" id="IL21R"/>
<dbReference type="HGNC" id="HGNC:6006">
    <property type="gene designation" value="IL21R"/>
</dbReference>
<dbReference type="HPA" id="ENSG00000103522">
    <property type="expression patterns" value="Group enriched (bone marrow, lymphoid tissue)"/>
</dbReference>
<dbReference type="MalaCards" id="IL21R"/>
<dbReference type="MIM" id="605383">
    <property type="type" value="gene"/>
</dbReference>
<dbReference type="MIM" id="615207">
    <property type="type" value="phenotype"/>
</dbReference>
<dbReference type="neXtProt" id="NX_Q9HBE5"/>
<dbReference type="OpenTargets" id="ENSG00000103522"/>
<dbReference type="Orphanet" id="357329">
    <property type="disease" value="Combined immunodeficiency due to IL21R deficiency"/>
</dbReference>
<dbReference type="PharmGKB" id="PA29821"/>
<dbReference type="VEuPathDB" id="HostDB:ENSG00000103522"/>
<dbReference type="eggNOG" id="ENOG502S0QM">
    <property type="taxonomic scope" value="Eukaryota"/>
</dbReference>
<dbReference type="GeneTree" id="ENSGT00510000048783"/>
<dbReference type="HOGENOM" id="CLU_039739_0_0_1"/>
<dbReference type="InParanoid" id="Q9HBE5"/>
<dbReference type="OMA" id="CGWAAPL"/>
<dbReference type="OrthoDB" id="8939865at2759"/>
<dbReference type="PAN-GO" id="Q9HBE5">
    <property type="GO annotations" value="4 GO annotations based on evolutionary models"/>
</dbReference>
<dbReference type="PhylomeDB" id="Q9HBE5"/>
<dbReference type="TreeFam" id="TF337874"/>
<dbReference type="PathwayCommons" id="Q9HBE5"/>
<dbReference type="Reactome" id="R-HSA-9020958">
    <property type="pathway name" value="Interleukin-21 signaling"/>
</dbReference>
<dbReference type="SignaLink" id="Q9HBE5"/>
<dbReference type="SIGNOR" id="Q9HBE5"/>
<dbReference type="BioGRID-ORCS" id="50615">
    <property type="hits" value="11 hits in 1141 CRISPR screens"/>
</dbReference>
<dbReference type="ChiTaRS" id="IL21R">
    <property type="organism name" value="human"/>
</dbReference>
<dbReference type="EvolutionaryTrace" id="Q9HBE5"/>
<dbReference type="GeneWiki" id="Interleukin-21_receptor"/>
<dbReference type="GenomeRNAi" id="50615"/>
<dbReference type="Pharos" id="Q9HBE5">
    <property type="development level" value="Tbio"/>
</dbReference>
<dbReference type="PRO" id="PR:Q9HBE5"/>
<dbReference type="Proteomes" id="UP000005640">
    <property type="component" value="Chromosome 16"/>
</dbReference>
<dbReference type="RNAct" id="Q9HBE5">
    <property type="molecule type" value="protein"/>
</dbReference>
<dbReference type="Bgee" id="ENSG00000103522">
    <property type="expression patterns" value="Expressed in granulocyte and 139 other cell types or tissues"/>
</dbReference>
<dbReference type="GO" id="GO:0009897">
    <property type="term" value="C:external side of plasma membrane"/>
    <property type="evidence" value="ECO:0000318"/>
    <property type="project" value="GO_Central"/>
</dbReference>
<dbReference type="GO" id="GO:0016020">
    <property type="term" value="C:membrane"/>
    <property type="evidence" value="ECO:0000303"/>
    <property type="project" value="UniProtKB"/>
</dbReference>
<dbReference type="GO" id="GO:0005886">
    <property type="term" value="C:plasma membrane"/>
    <property type="evidence" value="ECO:0000304"/>
    <property type="project" value="Reactome"/>
</dbReference>
<dbReference type="GO" id="GO:0004896">
    <property type="term" value="F:cytokine receptor activity"/>
    <property type="evidence" value="ECO:0000314"/>
    <property type="project" value="MGI"/>
</dbReference>
<dbReference type="GO" id="GO:0001532">
    <property type="term" value="F:interleukin-21 receptor activity"/>
    <property type="evidence" value="ECO:0000303"/>
    <property type="project" value="UniProtKB"/>
</dbReference>
<dbReference type="GO" id="GO:0004888">
    <property type="term" value="F:transmembrane signaling receptor activity"/>
    <property type="evidence" value="ECO:0000314"/>
    <property type="project" value="MGI"/>
</dbReference>
<dbReference type="GO" id="GO:0019221">
    <property type="term" value="P:cytokine-mediated signaling pathway"/>
    <property type="evidence" value="ECO:0000318"/>
    <property type="project" value="GO_Central"/>
</dbReference>
<dbReference type="GO" id="GO:0030101">
    <property type="term" value="P:natural killer cell activation"/>
    <property type="evidence" value="ECO:0000303"/>
    <property type="project" value="UniProtKB"/>
</dbReference>
<dbReference type="CDD" id="cd00063">
    <property type="entry name" value="FN3"/>
    <property type="match status" value="1"/>
</dbReference>
<dbReference type="FunFam" id="2.60.40.10:FF:001768">
    <property type="entry name" value="Interleukin-21 receptor"/>
    <property type="match status" value="1"/>
</dbReference>
<dbReference type="FunFam" id="2.60.40.10:FF:001829">
    <property type="entry name" value="Interleukin-21 receptor"/>
    <property type="match status" value="1"/>
</dbReference>
<dbReference type="Gene3D" id="2.60.40.10">
    <property type="entry name" value="Immunoglobulins"/>
    <property type="match status" value="2"/>
</dbReference>
<dbReference type="InterPro" id="IPR003961">
    <property type="entry name" value="FN3_dom"/>
</dbReference>
<dbReference type="InterPro" id="IPR036116">
    <property type="entry name" value="FN3_sf"/>
</dbReference>
<dbReference type="InterPro" id="IPR003531">
    <property type="entry name" value="Hempt_rcpt_S_F1_CS"/>
</dbReference>
<dbReference type="InterPro" id="IPR013783">
    <property type="entry name" value="Ig-like_fold"/>
</dbReference>
<dbReference type="PANTHER" id="PTHR23037">
    <property type="entry name" value="CYTOKINE RECEPTOR"/>
    <property type="match status" value="1"/>
</dbReference>
<dbReference type="PANTHER" id="PTHR23037:SF7">
    <property type="entry name" value="INTERLEUKIN-21 RECEPTOR"/>
    <property type="match status" value="1"/>
</dbReference>
<dbReference type="SUPFAM" id="SSF49265">
    <property type="entry name" value="Fibronectin type III"/>
    <property type="match status" value="1"/>
</dbReference>
<dbReference type="PROSITE" id="PS50853">
    <property type="entry name" value="FN3"/>
    <property type="match status" value="1"/>
</dbReference>
<dbReference type="PROSITE" id="PS01355">
    <property type="entry name" value="HEMATOPO_REC_S_F1"/>
    <property type="match status" value="1"/>
</dbReference>
<accession>Q9HBE5</accession>
<accession>A8K9E8</accession>
<accession>D3DWF7</accession>
<accession>Q96HZ1</accession>
<accession>Q9HB91</accession>
<gene>
    <name type="primary">IL21R</name>
    <name type="synonym">NILR</name>
    <name type="ORF">UNQ3121/PRO10273</name>
</gene>